<name>H2B1N_HUMAN</name>
<protein>
    <recommendedName>
        <fullName>Histone H2B type 1-N</fullName>
    </recommendedName>
    <alternativeName>
        <fullName>Histone H2B.d</fullName>
        <shortName>H2B/d</shortName>
    </alternativeName>
</protein>
<dbReference type="EMBL" id="Z83336">
    <property type="protein sequence ID" value="CAB05938.1"/>
    <property type="molecule type" value="Genomic_DNA"/>
</dbReference>
<dbReference type="EMBL" id="AF531297">
    <property type="protein sequence ID" value="AAN06697.1"/>
    <property type="molecule type" value="Genomic_DNA"/>
</dbReference>
<dbReference type="EMBL" id="AK312228">
    <property type="protein sequence ID" value="BAG35161.1"/>
    <property type="molecule type" value="mRNA"/>
</dbReference>
<dbReference type="EMBL" id="Z98744">
    <property type="status" value="NOT_ANNOTATED_CDS"/>
    <property type="molecule type" value="Genomic_DNA"/>
</dbReference>
<dbReference type="EMBL" id="CH471081">
    <property type="protein sequence ID" value="EAX03114.1"/>
    <property type="molecule type" value="Genomic_DNA"/>
</dbReference>
<dbReference type="EMBL" id="BC011372">
    <property type="status" value="NOT_ANNOTATED_CDS"/>
    <property type="molecule type" value="mRNA"/>
</dbReference>
<dbReference type="EMBL" id="BC101411">
    <property type="protein sequence ID" value="AAI01412.1"/>
    <property type="molecule type" value="mRNA"/>
</dbReference>
<dbReference type="EMBL" id="BC101412">
    <property type="protein sequence ID" value="AAI01413.1"/>
    <property type="molecule type" value="mRNA"/>
</dbReference>
<dbReference type="EMBL" id="BC101413">
    <property type="protein sequence ID" value="AAI01414.1"/>
    <property type="molecule type" value="mRNA"/>
</dbReference>
<dbReference type="CCDS" id="CCDS4633.1"/>
<dbReference type="RefSeq" id="NP_003511.1">
    <property type="nucleotide sequence ID" value="NM_003520.4"/>
</dbReference>
<dbReference type="PDB" id="8OL1">
    <property type="method" value="EM"/>
    <property type="resolution" value="3.50 A"/>
    <property type="chains" value="H=32-125"/>
</dbReference>
<dbReference type="PDBsum" id="8OL1"/>
<dbReference type="EMDB" id="EMD-16936"/>
<dbReference type="SMR" id="Q99877"/>
<dbReference type="BioGRID" id="113937">
    <property type="interactions" value="149"/>
</dbReference>
<dbReference type="FunCoup" id="Q99877">
    <property type="interactions" value="1252"/>
</dbReference>
<dbReference type="IntAct" id="Q99877">
    <property type="interactions" value="29"/>
</dbReference>
<dbReference type="MINT" id="Q99877"/>
<dbReference type="STRING" id="9606.ENSP00000483903"/>
<dbReference type="GlyCosmos" id="Q99877">
    <property type="glycosylation" value="1 site, No reported glycans"/>
</dbReference>
<dbReference type="GlyGen" id="Q99877">
    <property type="glycosylation" value="2 sites, 1 O-linked glycan (1 site)"/>
</dbReference>
<dbReference type="iPTMnet" id="Q99877"/>
<dbReference type="PhosphoSitePlus" id="Q99877"/>
<dbReference type="SwissPalm" id="Q99877"/>
<dbReference type="BioMuta" id="HIST1H2BN"/>
<dbReference type="DMDM" id="7387741"/>
<dbReference type="jPOST" id="Q99877"/>
<dbReference type="MassIVE" id="Q99877"/>
<dbReference type="PaxDb" id="9606-ENSP00000483903"/>
<dbReference type="PeptideAtlas" id="Q99877"/>
<dbReference type="PRIDE" id="Q99877"/>
<dbReference type="Pumba" id="Q99877"/>
<dbReference type="TopDownProteomics" id="Q99877"/>
<dbReference type="Antibodypedia" id="25808">
    <property type="antibodies" value="164 antibodies from 11 providers"/>
</dbReference>
<dbReference type="DNASU" id="8341"/>
<dbReference type="Ensembl" id="ENST00000449538.3">
    <property type="protein sequence ID" value="ENSP00000446031.1"/>
    <property type="gene ID" value="ENSG00000233822.6"/>
</dbReference>
<dbReference type="Ensembl" id="ENST00000612898.2">
    <property type="protein sequence ID" value="ENSP00000483903.1"/>
    <property type="gene ID" value="ENSG00000233822.6"/>
</dbReference>
<dbReference type="GeneID" id="8341"/>
<dbReference type="KEGG" id="hsa:8341"/>
<dbReference type="MANE-Select" id="ENST00000612898.2">
    <property type="protein sequence ID" value="ENSP00000483903.1"/>
    <property type="RefSeq nucleotide sequence ID" value="NM_003520.4"/>
    <property type="RefSeq protein sequence ID" value="NP_003511.1"/>
</dbReference>
<dbReference type="UCSC" id="uc003njt.2">
    <property type="organism name" value="human"/>
</dbReference>
<dbReference type="AGR" id="HGNC:4749"/>
<dbReference type="CTD" id="8341"/>
<dbReference type="DisGeNET" id="8341"/>
<dbReference type="GeneCards" id="H2BC15"/>
<dbReference type="HGNC" id="HGNC:4749">
    <property type="gene designation" value="H2BC15"/>
</dbReference>
<dbReference type="HPA" id="ENSG00000233822">
    <property type="expression patterns" value="Low tissue specificity"/>
</dbReference>
<dbReference type="MIM" id="602801">
    <property type="type" value="gene"/>
</dbReference>
<dbReference type="neXtProt" id="NX_Q99877"/>
<dbReference type="OpenTargets" id="ENSG00000233822"/>
<dbReference type="VEuPathDB" id="HostDB:ENSG00000233822"/>
<dbReference type="eggNOG" id="KOG1744">
    <property type="taxonomic scope" value="Eukaryota"/>
</dbReference>
<dbReference type="GeneTree" id="ENSGT01110000267152"/>
<dbReference type="HOGENOM" id="CLU_075666_2_1_1"/>
<dbReference type="InParanoid" id="Q99877"/>
<dbReference type="OMA" id="TENMTQH"/>
<dbReference type="OrthoDB" id="9537006at2759"/>
<dbReference type="PAN-GO" id="Q99877">
    <property type="GO annotations" value="2 GO annotations based on evolutionary models"/>
</dbReference>
<dbReference type="PhylomeDB" id="Q99877"/>
<dbReference type="TreeFam" id="TF300212"/>
<dbReference type="PathwayCommons" id="Q99877"/>
<dbReference type="Reactome" id="R-HSA-110328">
    <property type="pathway name" value="Recognition and association of DNA glycosylase with site containing an affected pyrimidine"/>
</dbReference>
<dbReference type="Reactome" id="R-HSA-110329">
    <property type="pathway name" value="Cleavage of the damaged pyrimidine"/>
</dbReference>
<dbReference type="Reactome" id="R-HSA-110330">
    <property type="pathway name" value="Recognition and association of DNA glycosylase with site containing an affected purine"/>
</dbReference>
<dbReference type="Reactome" id="R-HSA-110331">
    <property type="pathway name" value="Cleavage of the damaged purine"/>
</dbReference>
<dbReference type="Reactome" id="R-HSA-1221632">
    <property type="pathway name" value="Meiotic synapsis"/>
</dbReference>
<dbReference type="Reactome" id="R-HSA-171306">
    <property type="pathway name" value="Packaging Of Telomere Ends"/>
</dbReference>
<dbReference type="Reactome" id="R-HSA-1912408">
    <property type="pathway name" value="Pre-NOTCH Transcription and Translation"/>
</dbReference>
<dbReference type="Reactome" id="R-HSA-201722">
    <property type="pathway name" value="Formation of the beta-catenin:TCF transactivating complex"/>
</dbReference>
<dbReference type="Reactome" id="R-HSA-212300">
    <property type="pathway name" value="PRC2 methylates histones and DNA"/>
</dbReference>
<dbReference type="Reactome" id="R-HSA-2299718">
    <property type="pathway name" value="Condensation of Prophase Chromosomes"/>
</dbReference>
<dbReference type="Reactome" id="R-HSA-2559580">
    <property type="pathway name" value="Oxidative Stress Induced Senescence"/>
</dbReference>
<dbReference type="Reactome" id="R-HSA-2559582">
    <property type="pathway name" value="Senescence-Associated Secretory Phenotype (SASP)"/>
</dbReference>
<dbReference type="Reactome" id="R-HSA-2559586">
    <property type="pathway name" value="DNA Damage/Telomere Stress Induced Senescence"/>
</dbReference>
<dbReference type="Reactome" id="R-HSA-3214815">
    <property type="pathway name" value="HDACs deacetylate histones"/>
</dbReference>
<dbReference type="Reactome" id="R-HSA-3214847">
    <property type="pathway name" value="HATs acetylate histones"/>
</dbReference>
<dbReference type="Reactome" id="R-HSA-427359">
    <property type="pathway name" value="SIRT1 negatively regulates rRNA expression"/>
</dbReference>
<dbReference type="Reactome" id="R-HSA-427389">
    <property type="pathway name" value="ERCC6 (CSB) and EHMT2 (G9a) positively regulate rRNA expression"/>
</dbReference>
<dbReference type="Reactome" id="R-HSA-427413">
    <property type="pathway name" value="NoRC negatively regulates rRNA expression"/>
</dbReference>
<dbReference type="Reactome" id="R-HSA-5250924">
    <property type="pathway name" value="B-WICH complex positively regulates rRNA expression"/>
</dbReference>
<dbReference type="Reactome" id="R-HSA-5334118">
    <property type="pathway name" value="DNA methylation"/>
</dbReference>
<dbReference type="Reactome" id="R-HSA-5578749">
    <property type="pathway name" value="Transcriptional regulation by small RNAs"/>
</dbReference>
<dbReference type="Reactome" id="R-HSA-5617472">
    <property type="pathway name" value="Activation of anterior HOX genes in hindbrain development during early embryogenesis"/>
</dbReference>
<dbReference type="Reactome" id="R-HSA-5625886">
    <property type="pathway name" value="Activated PKN1 stimulates transcription of AR (androgen receptor) regulated genes KLK2 and KLK3"/>
</dbReference>
<dbReference type="Reactome" id="R-HSA-5689880">
    <property type="pathway name" value="Ub-specific processing proteases"/>
</dbReference>
<dbReference type="Reactome" id="R-HSA-5693565">
    <property type="pathway name" value="Recruitment and ATM-mediated phosphorylation of repair and signaling proteins at DNA double strand breaks"/>
</dbReference>
<dbReference type="Reactome" id="R-HSA-5693571">
    <property type="pathway name" value="Nonhomologous End-Joining (NHEJ)"/>
</dbReference>
<dbReference type="Reactome" id="R-HSA-5693607">
    <property type="pathway name" value="Processing of DNA double-strand break ends"/>
</dbReference>
<dbReference type="Reactome" id="R-HSA-606279">
    <property type="pathway name" value="Deposition of new CENPA-containing nucleosomes at the centromere"/>
</dbReference>
<dbReference type="Reactome" id="R-HSA-68616">
    <property type="pathway name" value="Assembly of the ORC complex at the origin of replication"/>
</dbReference>
<dbReference type="Reactome" id="R-HSA-69473">
    <property type="pathway name" value="G2/M DNA damage checkpoint"/>
</dbReference>
<dbReference type="Reactome" id="R-HSA-73728">
    <property type="pathway name" value="RNA Polymerase I Promoter Opening"/>
</dbReference>
<dbReference type="Reactome" id="R-HSA-73772">
    <property type="pathway name" value="RNA Polymerase I Promoter Escape"/>
</dbReference>
<dbReference type="Reactome" id="R-HSA-8866654">
    <property type="pathway name" value="E3 ubiquitin ligases ubiquitinate target proteins"/>
</dbReference>
<dbReference type="Reactome" id="R-HSA-8936459">
    <property type="pathway name" value="RUNX1 regulates genes involved in megakaryocyte differentiation and platelet function"/>
</dbReference>
<dbReference type="Reactome" id="R-HSA-8939236">
    <property type="pathway name" value="RUNX1 regulates transcription of genes involved in differentiation of HSCs"/>
</dbReference>
<dbReference type="Reactome" id="R-HSA-9018519">
    <property type="pathway name" value="Estrogen-dependent gene expression"/>
</dbReference>
<dbReference type="Reactome" id="R-HSA-912446">
    <property type="pathway name" value="Meiotic recombination"/>
</dbReference>
<dbReference type="Reactome" id="R-HSA-9609690">
    <property type="pathway name" value="HCMV Early Events"/>
</dbReference>
<dbReference type="Reactome" id="R-HSA-9610379">
    <property type="pathway name" value="HCMV Late Events"/>
</dbReference>
<dbReference type="Reactome" id="R-HSA-9616222">
    <property type="pathway name" value="Transcriptional regulation of granulopoiesis"/>
</dbReference>
<dbReference type="Reactome" id="R-HSA-9670095">
    <property type="pathway name" value="Inhibition of DNA recombination at telomere"/>
</dbReference>
<dbReference type="Reactome" id="R-HSA-9710421">
    <property type="pathway name" value="Defective pyroptosis"/>
</dbReference>
<dbReference type="Reactome" id="R-HSA-977225">
    <property type="pathway name" value="Amyloid fiber formation"/>
</dbReference>
<dbReference type="Reactome" id="R-HSA-9821002">
    <property type="pathway name" value="Chromatin modifications during the maternal to zygotic transition (MZT)"/>
</dbReference>
<dbReference type="Reactome" id="R-HSA-9821993">
    <property type="pathway name" value="Replacement of protamines by nucleosomes in the male pronucleus"/>
</dbReference>
<dbReference type="Reactome" id="R-HSA-9833110">
    <property type="pathway name" value="RSV-host interactions"/>
</dbReference>
<dbReference type="Reactome" id="R-HSA-9841922">
    <property type="pathway name" value="MLL4 and MLL3 complexes regulate expression of PPARG target genes in adipogenesis and hepatic steatosis"/>
</dbReference>
<dbReference type="Reactome" id="R-HSA-9843940">
    <property type="pathway name" value="Regulation of endogenous retroelements by KRAB-ZFP proteins"/>
</dbReference>
<dbReference type="Reactome" id="R-HSA-9843970">
    <property type="pathway name" value="Regulation of endogenous retroelements by the Human Silencing Hub (HUSH) complex"/>
</dbReference>
<dbReference type="Reactome" id="R-HSA-9845323">
    <property type="pathway name" value="Regulation of endogenous retroelements by Piwi-interacting RNAs (piRNAs)"/>
</dbReference>
<dbReference type="SignaLink" id="Q99877"/>
<dbReference type="SIGNOR" id="Q99877"/>
<dbReference type="BioGRID-ORCS" id="8341">
    <property type="hits" value="447 hits in 1106 CRISPR screens"/>
</dbReference>
<dbReference type="CD-CODE" id="91857CE7">
    <property type="entry name" value="Nucleolus"/>
</dbReference>
<dbReference type="ChiTaRS" id="HIST1H2BN">
    <property type="organism name" value="human"/>
</dbReference>
<dbReference type="GeneWiki" id="HIST1H2BN"/>
<dbReference type="GenomeRNAi" id="8341"/>
<dbReference type="Pharos" id="Q99877">
    <property type="development level" value="Tbio"/>
</dbReference>
<dbReference type="PRO" id="PR:Q99877"/>
<dbReference type="Proteomes" id="UP000005640">
    <property type="component" value="Chromosome 6"/>
</dbReference>
<dbReference type="RNAct" id="Q99877">
    <property type="molecule type" value="protein"/>
</dbReference>
<dbReference type="Bgee" id="ENSG00000233822">
    <property type="expression patterns" value="Expressed in adrenal tissue and 126 other cell types or tissues"/>
</dbReference>
<dbReference type="ExpressionAtlas" id="Q99877">
    <property type="expression patterns" value="baseline and differential"/>
</dbReference>
<dbReference type="GO" id="GO:0005829">
    <property type="term" value="C:cytosol"/>
    <property type="evidence" value="ECO:0000314"/>
    <property type="project" value="HPA"/>
</dbReference>
<dbReference type="GO" id="GO:0070062">
    <property type="term" value="C:extracellular exosome"/>
    <property type="evidence" value="ECO:0007005"/>
    <property type="project" value="UniProtKB"/>
</dbReference>
<dbReference type="GO" id="GO:0005654">
    <property type="term" value="C:nucleoplasm"/>
    <property type="evidence" value="ECO:0000314"/>
    <property type="project" value="HPA"/>
</dbReference>
<dbReference type="GO" id="GO:0000786">
    <property type="term" value="C:nucleosome"/>
    <property type="evidence" value="ECO:0000303"/>
    <property type="project" value="UniProtKB"/>
</dbReference>
<dbReference type="GO" id="GO:0005634">
    <property type="term" value="C:nucleus"/>
    <property type="evidence" value="ECO:0000314"/>
    <property type="project" value="UniProtKB"/>
</dbReference>
<dbReference type="GO" id="GO:0003677">
    <property type="term" value="F:DNA binding"/>
    <property type="evidence" value="ECO:0000303"/>
    <property type="project" value="UniProtKB"/>
</dbReference>
<dbReference type="GO" id="GO:0046982">
    <property type="term" value="F:protein heterodimerization activity"/>
    <property type="evidence" value="ECO:0007669"/>
    <property type="project" value="InterPro"/>
</dbReference>
<dbReference type="GO" id="GO:0030527">
    <property type="term" value="F:structural constituent of chromatin"/>
    <property type="evidence" value="ECO:0007669"/>
    <property type="project" value="InterPro"/>
</dbReference>
<dbReference type="GO" id="GO:0006334">
    <property type="term" value="P:nucleosome assembly"/>
    <property type="evidence" value="ECO:0000303"/>
    <property type="project" value="UniProtKB"/>
</dbReference>
<dbReference type="CDD" id="cd22910">
    <property type="entry name" value="HFD_H2B"/>
    <property type="match status" value="1"/>
</dbReference>
<dbReference type="FunFam" id="1.10.20.10:FF:000003">
    <property type="entry name" value="Histone H2B"/>
    <property type="match status" value="1"/>
</dbReference>
<dbReference type="Gene3D" id="1.10.20.10">
    <property type="entry name" value="Histone, subunit A"/>
    <property type="match status" value="1"/>
</dbReference>
<dbReference type="InterPro" id="IPR009072">
    <property type="entry name" value="Histone-fold"/>
</dbReference>
<dbReference type="InterPro" id="IPR007125">
    <property type="entry name" value="Histone_H2A/H2B/H3"/>
</dbReference>
<dbReference type="InterPro" id="IPR000558">
    <property type="entry name" value="Histone_H2B"/>
</dbReference>
<dbReference type="InterPro" id="IPR055333">
    <property type="entry name" value="HISTONE_H2B_site"/>
</dbReference>
<dbReference type="PANTHER" id="PTHR23428">
    <property type="entry name" value="HISTONE H2B"/>
    <property type="match status" value="1"/>
</dbReference>
<dbReference type="Pfam" id="PF00125">
    <property type="entry name" value="Histone"/>
    <property type="match status" value="1"/>
</dbReference>
<dbReference type="PRINTS" id="PR00621">
    <property type="entry name" value="HISTONEH2B"/>
</dbReference>
<dbReference type="SMART" id="SM00427">
    <property type="entry name" value="H2B"/>
    <property type="match status" value="1"/>
</dbReference>
<dbReference type="SUPFAM" id="SSF47113">
    <property type="entry name" value="Histone-fold"/>
    <property type="match status" value="1"/>
</dbReference>
<dbReference type="PROSITE" id="PS00357">
    <property type="entry name" value="HISTONE_H2B"/>
    <property type="match status" value="1"/>
</dbReference>
<proteinExistence type="evidence at protein level"/>
<accession>Q99877</accession>
<accession>B2R5L4</accession>
<accession>Q494S8</accession>
<accession>Q96FB7</accession>
<keyword id="KW-0002">3D-structure</keyword>
<keyword id="KW-0007">Acetylation</keyword>
<keyword id="KW-0013">ADP-ribosylation</keyword>
<keyword id="KW-0158">Chromosome</keyword>
<keyword id="KW-0903">Direct protein sequencing</keyword>
<keyword id="KW-0238">DNA-binding</keyword>
<keyword id="KW-0325">Glycoprotein</keyword>
<keyword id="KW-0379">Hydroxylation</keyword>
<keyword id="KW-1017">Isopeptide bond</keyword>
<keyword id="KW-0488">Methylation</keyword>
<keyword id="KW-0544">Nucleosome core</keyword>
<keyword id="KW-0539">Nucleus</keyword>
<keyword id="KW-0597">Phosphoprotein</keyword>
<keyword id="KW-1185">Reference proteome</keyword>
<keyword id="KW-0832">Ubl conjugation</keyword>
<reference key="1">
    <citation type="journal article" date="1997" name="Hum. Genet.">
        <title>The human histone gene cluster at the D6S105 locus.</title>
        <authorList>
            <person name="Albig W."/>
            <person name="Doenecke D."/>
        </authorList>
    </citation>
    <scope>NUCLEOTIDE SEQUENCE [GENOMIC DNA]</scope>
</reference>
<reference key="2">
    <citation type="journal article" date="2002" name="Genomics">
        <title>The human and mouse replication-dependent histone genes.</title>
        <authorList>
            <person name="Marzluff W.F."/>
            <person name="Gongidi P."/>
            <person name="Woods K.R."/>
            <person name="Jin J."/>
            <person name="Maltais L.J."/>
        </authorList>
    </citation>
    <scope>NUCLEOTIDE SEQUENCE [GENOMIC DNA]</scope>
</reference>
<reference key="3">
    <citation type="journal article" date="2004" name="Nat. Genet.">
        <title>Complete sequencing and characterization of 21,243 full-length human cDNAs.</title>
        <authorList>
            <person name="Ota T."/>
            <person name="Suzuki Y."/>
            <person name="Nishikawa T."/>
            <person name="Otsuki T."/>
            <person name="Sugiyama T."/>
            <person name="Irie R."/>
            <person name="Wakamatsu A."/>
            <person name="Hayashi K."/>
            <person name="Sato H."/>
            <person name="Nagai K."/>
            <person name="Kimura K."/>
            <person name="Makita H."/>
            <person name="Sekine M."/>
            <person name="Obayashi M."/>
            <person name="Nishi T."/>
            <person name="Shibahara T."/>
            <person name="Tanaka T."/>
            <person name="Ishii S."/>
            <person name="Yamamoto J."/>
            <person name="Saito K."/>
            <person name="Kawai Y."/>
            <person name="Isono Y."/>
            <person name="Nakamura Y."/>
            <person name="Nagahari K."/>
            <person name="Murakami K."/>
            <person name="Yasuda T."/>
            <person name="Iwayanagi T."/>
            <person name="Wagatsuma M."/>
            <person name="Shiratori A."/>
            <person name="Sudo H."/>
            <person name="Hosoiri T."/>
            <person name="Kaku Y."/>
            <person name="Kodaira H."/>
            <person name="Kondo H."/>
            <person name="Sugawara M."/>
            <person name="Takahashi M."/>
            <person name="Kanda K."/>
            <person name="Yokoi T."/>
            <person name="Furuya T."/>
            <person name="Kikkawa E."/>
            <person name="Omura Y."/>
            <person name="Abe K."/>
            <person name="Kamihara K."/>
            <person name="Katsuta N."/>
            <person name="Sato K."/>
            <person name="Tanikawa M."/>
            <person name="Yamazaki M."/>
            <person name="Ninomiya K."/>
            <person name="Ishibashi T."/>
            <person name="Yamashita H."/>
            <person name="Murakawa K."/>
            <person name="Fujimori K."/>
            <person name="Tanai H."/>
            <person name="Kimata M."/>
            <person name="Watanabe M."/>
            <person name="Hiraoka S."/>
            <person name="Chiba Y."/>
            <person name="Ishida S."/>
            <person name="Ono Y."/>
            <person name="Takiguchi S."/>
            <person name="Watanabe S."/>
            <person name="Yosida M."/>
            <person name="Hotuta T."/>
            <person name="Kusano J."/>
            <person name="Kanehori K."/>
            <person name="Takahashi-Fujii A."/>
            <person name="Hara H."/>
            <person name="Tanase T.-O."/>
            <person name="Nomura Y."/>
            <person name="Togiya S."/>
            <person name="Komai F."/>
            <person name="Hara R."/>
            <person name="Takeuchi K."/>
            <person name="Arita M."/>
            <person name="Imose N."/>
            <person name="Musashino K."/>
            <person name="Yuuki H."/>
            <person name="Oshima A."/>
            <person name="Sasaki N."/>
            <person name="Aotsuka S."/>
            <person name="Yoshikawa Y."/>
            <person name="Matsunawa H."/>
            <person name="Ichihara T."/>
            <person name="Shiohata N."/>
            <person name="Sano S."/>
            <person name="Moriya S."/>
            <person name="Momiyama H."/>
            <person name="Satoh N."/>
            <person name="Takami S."/>
            <person name="Terashima Y."/>
            <person name="Suzuki O."/>
            <person name="Nakagawa S."/>
            <person name="Senoh A."/>
            <person name="Mizoguchi H."/>
            <person name="Goto Y."/>
            <person name="Shimizu F."/>
            <person name="Wakebe H."/>
            <person name="Hishigaki H."/>
            <person name="Watanabe T."/>
            <person name="Sugiyama A."/>
            <person name="Takemoto M."/>
            <person name="Kawakami B."/>
            <person name="Yamazaki M."/>
            <person name="Watanabe K."/>
            <person name="Kumagai A."/>
            <person name="Itakura S."/>
            <person name="Fukuzumi Y."/>
            <person name="Fujimori Y."/>
            <person name="Komiyama M."/>
            <person name="Tashiro H."/>
            <person name="Tanigami A."/>
            <person name="Fujiwara T."/>
            <person name="Ono T."/>
            <person name="Yamada K."/>
            <person name="Fujii Y."/>
            <person name="Ozaki K."/>
            <person name="Hirao M."/>
            <person name="Ohmori Y."/>
            <person name="Kawabata A."/>
            <person name="Hikiji T."/>
            <person name="Kobatake N."/>
            <person name="Inagaki H."/>
            <person name="Ikema Y."/>
            <person name="Okamoto S."/>
            <person name="Okitani R."/>
            <person name="Kawakami T."/>
            <person name="Noguchi S."/>
            <person name="Itoh T."/>
            <person name="Shigeta K."/>
            <person name="Senba T."/>
            <person name="Matsumura K."/>
            <person name="Nakajima Y."/>
            <person name="Mizuno T."/>
            <person name="Morinaga M."/>
            <person name="Sasaki M."/>
            <person name="Togashi T."/>
            <person name="Oyama M."/>
            <person name="Hata H."/>
            <person name="Watanabe M."/>
            <person name="Komatsu T."/>
            <person name="Mizushima-Sugano J."/>
            <person name="Satoh T."/>
            <person name="Shirai Y."/>
            <person name="Takahashi Y."/>
            <person name="Nakagawa K."/>
            <person name="Okumura K."/>
            <person name="Nagase T."/>
            <person name="Nomura N."/>
            <person name="Kikuchi H."/>
            <person name="Masuho Y."/>
            <person name="Yamashita R."/>
            <person name="Nakai K."/>
            <person name="Yada T."/>
            <person name="Nakamura Y."/>
            <person name="Ohara O."/>
            <person name="Isogai T."/>
            <person name="Sugano S."/>
        </authorList>
    </citation>
    <scope>NUCLEOTIDE SEQUENCE [LARGE SCALE MRNA]</scope>
    <source>
        <tissue>Trachea</tissue>
    </source>
</reference>
<reference key="4">
    <citation type="journal article" date="2003" name="Nature">
        <title>The DNA sequence and analysis of human chromosome 6.</title>
        <authorList>
            <person name="Mungall A.J."/>
            <person name="Palmer S.A."/>
            <person name="Sims S.K."/>
            <person name="Edwards C.A."/>
            <person name="Ashurst J.L."/>
            <person name="Wilming L."/>
            <person name="Jones M.C."/>
            <person name="Horton R."/>
            <person name="Hunt S.E."/>
            <person name="Scott C.E."/>
            <person name="Gilbert J.G.R."/>
            <person name="Clamp M.E."/>
            <person name="Bethel G."/>
            <person name="Milne S."/>
            <person name="Ainscough R."/>
            <person name="Almeida J.P."/>
            <person name="Ambrose K.D."/>
            <person name="Andrews T.D."/>
            <person name="Ashwell R.I.S."/>
            <person name="Babbage A.K."/>
            <person name="Bagguley C.L."/>
            <person name="Bailey J."/>
            <person name="Banerjee R."/>
            <person name="Barker D.J."/>
            <person name="Barlow K.F."/>
            <person name="Bates K."/>
            <person name="Beare D.M."/>
            <person name="Beasley H."/>
            <person name="Beasley O."/>
            <person name="Bird C.P."/>
            <person name="Blakey S.E."/>
            <person name="Bray-Allen S."/>
            <person name="Brook J."/>
            <person name="Brown A.J."/>
            <person name="Brown J.Y."/>
            <person name="Burford D.C."/>
            <person name="Burrill W."/>
            <person name="Burton J."/>
            <person name="Carder C."/>
            <person name="Carter N.P."/>
            <person name="Chapman J.C."/>
            <person name="Clark S.Y."/>
            <person name="Clark G."/>
            <person name="Clee C.M."/>
            <person name="Clegg S."/>
            <person name="Cobley V."/>
            <person name="Collier R.E."/>
            <person name="Collins J.E."/>
            <person name="Colman L.K."/>
            <person name="Corby N.R."/>
            <person name="Coville G.J."/>
            <person name="Culley K.M."/>
            <person name="Dhami P."/>
            <person name="Davies J."/>
            <person name="Dunn M."/>
            <person name="Earthrowl M.E."/>
            <person name="Ellington A.E."/>
            <person name="Evans K.A."/>
            <person name="Faulkner L."/>
            <person name="Francis M.D."/>
            <person name="Frankish A."/>
            <person name="Frankland J."/>
            <person name="French L."/>
            <person name="Garner P."/>
            <person name="Garnett J."/>
            <person name="Ghori M.J."/>
            <person name="Gilby L.M."/>
            <person name="Gillson C.J."/>
            <person name="Glithero R.J."/>
            <person name="Grafham D.V."/>
            <person name="Grant M."/>
            <person name="Gribble S."/>
            <person name="Griffiths C."/>
            <person name="Griffiths M.N.D."/>
            <person name="Hall R."/>
            <person name="Halls K.S."/>
            <person name="Hammond S."/>
            <person name="Harley J.L."/>
            <person name="Hart E.A."/>
            <person name="Heath P.D."/>
            <person name="Heathcott R."/>
            <person name="Holmes S.J."/>
            <person name="Howden P.J."/>
            <person name="Howe K.L."/>
            <person name="Howell G.R."/>
            <person name="Huckle E."/>
            <person name="Humphray S.J."/>
            <person name="Humphries M.D."/>
            <person name="Hunt A.R."/>
            <person name="Johnson C.M."/>
            <person name="Joy A.A."/>
            <person name="Kay M."/>
            <person name="Keenan S.J."/>
            <person name="Kimberley A.M."/>
            <person name="King A."/>
            <person name="Laird G.K."/>
            <person name="Langford C."/>
            <person name="Lawlor S."/>
            <person name="Leongamornlert D.A."/>
            <person name="Leversha M."/>
            <person name="Lloyd C.R."/>
            <person name="Lloyd D.M."/>
            <person name="Loveland J.E."/>
            <person name="Lovell J."/>
            <person name="Martin S."/>
            <person name="Mashreghi-Mohammadi M."/>
            <person name="Maslen G.L."/>
            <person name="Matthews L."/>
            <person name="McCann O.T."/>
            <person name="McLaren S.J."/>
            <person name="McLay K."/>
            <person name="McMurray A."/>
            <person name="Moore M.J.F."/>
            <person name="Mullikin J.C."/>
            <person name="Niblett D."/>
            <person name="Nickerson T."/>
            <person name="Novik K.L."/>
            <person name="Oliver K."/>
            <person name="Overton-Larty E.K."/>
            <person name="Parker A."/>
            <person name="Patel R."/>
            <person name="Pearce A.V."/>
            <person name="Peck A.I."/>
            <person name="Phillimore B.J.C.T."/>
            <person name="Phillips S."/>
            <person name="Plumb R.W."/>
            <person name="Porter K.M."/>
            <person name="Ramsey Y."/>
            <person name="Ranby S.A."/>
            <person name="Rice C.M."/>
            <person name="Ross M.T."/>
            <person name="Searle S.M."/>
            <person name="Sehra H.K."/>
            <person name="Sheridan E."/>
            <person name="Skuce C.D."/>
            <person name="Smith S."/>
            <person name="Smith M."/>
            <person name="Spraggon L."/>
            <person name="Squares S.L."/>
            <person name="Steward C.A."/>
            <person name="Sycamore N."/>
            <person name="Tamlyn-Hall G."/>
            <person name="Tester J."/>
            <person name="Theaker A.J."/>
            <person name="Thomas D.W."/>
            <person name="Thorpe A."/>
            <person name="Tracey A."/>
            <person name="Tromans A."/>
            <person name="Tubby B."/>
            <person name="Wall M."/>
            <person name="Wallis J.M."/>
            <person name="West A.P."/>
            <person name="White S.S."/>
            <person name="Whitehead S.L."/>
            <person name="Whittaker H."/>
            <person name="Wild A."/>
            <person name="Willey D.J."/>
            <person name="Wilmer T.E."/>
            <person name="Wood J.M."/>
            <person name="Wray P.W."/>
            <person name="Wyatt J.C."/>
            <person name="Young L."/>
            <person name="Younger R.M."/>
            <person name="Bentley D.R."/>
            <person name="Coulson A."/>
            <person name="Durbin R.M."/>
            <person name="Hubbard T."/>
            <person name="Sulston J.E."/>
            <person name="Dunham I."/>
            <person name="Rogers J."/>
            <person name="Beck S."/>
        </authorList>
    </citation>
    <scope>NUCLEOTIDE SEQUENCE [LARGE SCALE GENOMIC DNA]</scope>
</reference>
<reference key="5">
    <citation type="submission" date="2005-07" db="EMBL/GenBank/DDBJ databases">
        <authorList>
            <person name="Mural R.J."/>
            <person name="Istrail S."/>
            <person name="Sutton G.G."/>
            <person name="Florea L."/>
            <person name="Halpern A.L."/>
            <person name="Mobarry C.M."/>
            <person name="Lippert R."/>
            <person name="Walenz B."/>
            <person name="Shatkay H."/>
            <person name="Dew I."/>
            <person name="Miller J.R."/>
            <person name="Flanigan M.J."/>
            <person name="Edwards N.J."/>
            <person name="Bolanos R."/>
            <person name="Fasulo D."/>
            <person name="Halldorsson B.V."/>
            <person name="Hannenhalli S."/>
            <person name="Turner R."/>
            <person name="Yooseph S."/>
            <person name="Lu F."/>
            <person name="Nusskern D.R."/>
            <person name="Shue B.C."/>
            <person name="Zheng X.H."/>
            <person name="Zhong F."/>
            <person name="Delcher A.L."/>
            <person name="Huson D.H."/>
            <person name="Kravitz S.A."/>
            <person name="Mouchard L."/>
            <person name="Reinert K."/>
            <person name="Remington K.A."/>
            <person name="Clark A.G."/>
            <person name="Waterman M.S."/>
            <person name="Eichler E.E."/>
            <person name="Adams M.D."/>
            <person name="Hunkapiller M.W."/>
            <person name="Myers E.W."/>
            <person name="Venter J.C."/>
        </authorList>
    </citation>
    <scope>NUCLEOTIDE SEQUENCE [LARGE SCALE GENOMIC DNA]</scope>
</reference>
<reference key="6">
    <citation type="journal article" date="2004" name="Genome Res.">
        <title>The status, quality, and expansion of the NIH full-length cDNA project: the Mammalian Gene Collection (MGC).</title>
        <authorList>
            <consortium name="The MGC Project Team"/>
        </authorList>
    </citation>
    <scope>NUCLEOTIDE SEQUENCE [LARGE SCALE MRNA]</scope>
    <source>
        <tissue>Eye</tissue>
    </source>
</reference>
<reference key="7">
    <citation type="journal article" date="2006" name="Mol. Cell. Proteomics">
        <title>Quantitative proteomic analysis of post-translational modifications of human histones.</title>
        <authorList>
            <person name="Beck H.C."/>
            <person name="Nielsen E.C."/>
            <person name="Matthiesen R."/>
            <person name="Jensen L.H."/>
            <person name="Sehested M."/>
            <person name="Finn P."/>
            <person name="Grauslund M."/>
            <person name="Hansen A.M."/>
            <person name="Jensen O.N."/>
        </authorList>
    </citation>
    <scope>PROTEIN SEQUENCE OF 7-24</scope>
    <scope>ACETYLATION AT LYS-6; LYS-12; LYS-13; LYS-16; LYS-17 AND LYS-21</scope>
    <scope>METHYLATION AT LYS-47; LYS-58 AND LYS-109</scope>
    <scope>UBIQUITINATION AT LYS-121</scope>
    <scope>IDENTIFICATION BY MASS SPECTROMETRY</scope>
</reference>
<reference key="8">
    <citation type="journal article" date="2003" name="Cell">
        <title>Apoptotic phosphorylation of histone H2B is mediated by mammalian sterile twenty kinase.</title>
        <authorList>
            <person name="Cheung W.L."/>
            <person name="Ajiro K."/>
            <person name="Samejima K."/>
            <person name="Kloc M."/>
            <person name="Cheung P."/>
            <person name="Mizzen C.A."/>
            <person name="Beeser A."/>
            <person name="Etkin L.D."/>
            <person name="Chernoff J."/>
            <person name="Earnshaw W.C."/>
            <person name="Allis C.D."/>
        </authorList>
    </citation>
    <scope>PHOSPHORYLATION AT SER-15</scope>
</reference>
<reference key="9">
    <citation type="journal article" date="2005" name="Mol. Cell">
        <title>Monoubiquitination of human histone H2B: the factors involved and their roles in HOX gene regulation.</title>
        <authorList>
            <person name="Zhu B."/>
            <person name="Zheng Y."/>
            <person name="Pham A.-D."/>
            <person name="Mandal S.S."/>
            <person name="Erdjument-Bromage H."/>
            <person name="Tempst P."/>
            <person name="Reinberg D."/>
        </authorList>
    </citation>
    <scope>UBIQUITINATION AT LYS-121</scope>
</reference>
<reference key="10">
    <citation type="journal article" date="2005" name="Mol. Cell. Biochem.">
        <title>Inhibition of core histones acetylation by carcinogenic nickel(II).</title>
        <authorList>
            <person name="Golebiowski F."/>
            <person name="Kasprzak K.S."/>
        </authorList>
    </citation>
    <scope>ACETYLATION AT LYS-6; LYS-13; LYS-16 AND LYS-21</scope>
</reference>
<reference key="11">
    <citation type="journal article" date="2006" name="Cell">
        <title>Histone H2B monoubiquitination functions cooperatively with FACT to regulate elongation by RNA polymerase II.</title>
        <authorList>
            <person name="Pavri R."/>
            <person name="Zhu B."/>
            <person name="Li G."/>
            <person name="Trojer P."/>
            <person name="Mandal S."/>
            <person name="Shilatifard A."/>
            <person name="Reinberg D."/>
        </authorList>
    </citation>
    <scope>UBIQUITINATION AT LYS-121</scope>
</reference>
<reference key="12">
    <citation type="journal article" date="2006" name="Mol. Cell. Proteomics">
        <title>Characterization of histones H2A and H2B variants and their post-translational modifications by mass spectrometry.</title>
        <authorList>
            <person name="Bonenfant D."/>
            <person name="Coulot M."/>
            <person name="Towbin H."/>
            <person name="Schindler P."/>
            <person name="van Oostrum J."/>
        </authorList>
    </citation>
    <scope>IDENTIFICATION BY MASS SPECTROMETRY [LARGE SCALE ANALYSIS]</scope>
</reference>
<reference key="13">
    <citation type="journal article" date="2011" name="Cell">
        <title>Identification of 67 histone marks and histone lysine crotonylation as a new type of histone modification.</title>
        <authorList>
            <person name="Tan M."/>
            <person name="Luo H."/>
            <person name="Lee S."/>
            <person name="Jin F."/>
            <person name="Yang J.S."/>
            <person name="Montellier E."/>
            <person name="Buchou T."/>
            <person name="Cheng Z."/>
            <person name="Rousseaux S."/>
            <person name="Rajagopal N."/>
            <person name="Lu Z."/>
            <person name="Ye Z."/>
            <person name="Zhu Q."/>
            <person name="Wysocka J."/>
            <person name="Ye Y."/>
            <person name="Khochbin S."/>
            <person name="Ren B."/>
            <person name="Zhao Y."/>
        </authorList>
    </citation>
    <scope>CROTONYLATION AT LYS-6; LYS-12; LYS-13; LYS-16; LYS-17; LYS-21; LYS-24 AND LYS-35</scope>
</reference>
<reference key="14">
    <citation type="journal article" date="2011" name="Mol. Cell">
        <title>The RING finger protein MSL2 in the MOF complex is an E3 ubiquitin ligase for H2B K34 and is involved in crosstalk with H3 K4 and K79 methylation.</title>
        <authorList>
            <person name="Wu L."/>
            <person name="Zee B.M."/>
            <person name="Wang Y."/>
            <person name="Garcia B.A."/>
            <person name="Dou Y."/>
        </authorList>
    </citation>
    <scope>UBIQUITINATION AT LYS-35</scope>
</reference>
<reference key="15">
    <citation type="journal article" date="2012" name="Mol. Cell. Proteomics">
        <title>Lysine succinylation and lysine malonylation in histones.</title>
        <authorList>
            <person name="Xie Z."/>
            <person name="Dai J."/>
            <person name="Dai L."/>
            <person name="Tan M."/>
            <person name="Cheng Z."/>
            <person name="Wu Y."/>
            <person name="Boeke J.D."/>
            <person name="Zhao Y."/>
        </authorList>
    </citation>
    <scope>SUCCINYLATION AT LYS-35; LYS-117 AND LYS-121</scope>
    <scope>MALONYLATION AT LYS-117</scope>
</reference>
<reference key="16">
    <citation type="journal article" date="2013" name="Genes Dev.">
        <title>USP49 deubiquitinates histone H2B and regulates cotranscriptional pre-mRNA splicing.</title>
        <authorList>
            <person name="Zhang Z."/>
            <person name="Jones A."/>
            <person name="Joo H.Y."/>
            <person name="Zhou D."/>
            <person name="Cao Y."/>
            <person name="Chen S."/>
            <person name="Erdjument-Bromage H."/>
            <person name="Renfrow M."/>
            <person name="He H."/>
            <person name="Tempst P."/>
            <person name="Townes T.M."/>
            <person name="Giles K.E."/>
            <person name="Ma L."/>
            <person name="Wang H."/>
        </authorList>
    </citation>
    <scope>UBIQUITINATION</scope>
    <scope>DEUBIQUITINATION BY USP49</scope>
</reference>
<reference key="17">
    <citation type="journal article" date="2014" name="Nat. Chem. Biol.">
        <title>Lysine 2-hydroxyisobutyrylation is a widely distributed active histone mark.</title>
        <authorList>
            <person name="Dai L."/>
            <person name="Peng C."/>
            <person name="Montellier E."/>
            <person name="Lu Z."/>
            <person name="Chen Y."/>
            <person name="Ishii H."/>
            <person name="Debernardi A."/>
            <person name="Buchou T."/>
            <person name="Rousseaux S."/>
            <person name="Jin F."/>
            <person name="Sabari B.R."/>
            <person name="Deng Z."/>
            <person name="Allis C.D."/>
            <person name="Ren B."/>
            <person name="Khochbin S."/>
            <person name="Zhao Y."/>
        </authorList>
    </citation>
    <scope>HYDROXYBUTYRYLATION AT LYS-6; LYS-13; LYS-21; LYS-24; LYS-25; LYS-35; LYS-44; LYS-47; LYS-58; LYS-86; LYS-109; LYS-117 AND LYS-121</scope>
</reference>
<reference key="18">
    <citation type="journal article" date="2016" name="Mol. Cell">
        <title>Dynamic competing histone H4 K5K8 acetylation and butyrylation are hallmarks of highly active gene promoters.</title>
        <authorList>
            <person name="Goudarzi A."/>
            <person name="Zhang D."/>
            <person name="Huang H."/>
            <person name="Barral S."/>
            <person name="Kwon O.K."/>
            <person name="Qi S."/>
            <person name="Tang Z."/>
            <person name="Buchou T."/>
            <person name="Vitte A.L."/>
            <person name="He T."/>
            <person name="Cheng Z."/>
            <person name="Montellier E."/>
            <person name="Gaucher J."/>
            <person name="Curtet S."/>
            <person name="Debernardi A."/>
            <person name="Charbonnier G."/>
            <person name="Puthier D."/>
            <person name="Petosa C."/>
            <person name="Panne D."/>
            <person name="Rousseaux S."/>
            <person name="Roeder R.G."/>
            <person name="Zhao Y."/>
            <person name="Khochbin S."/>
        </authorList>
    </citation>
    <scope>BUTYRYLATION AT LYS-6 AND LYS-21</scope>
</reference>
<reference key="19">
    <citation type="journal article" date="2016" name="Mol. Cell">
        <title>Metabolic regulation of gene expression by histone lysine beta-hydroxybutyrylation.</title>
        <authorList>
            <person name="Xie Z."/>
            <person name="Zhang D."/>
            <person name="Chung D."/>
            <person name="Tang Z."/>
            <person name="Huang H."/>
            <person name="Dai L."/>
            <person name="Qi S."/>
            <person name="Li J."/>
            <person name="Colak G."/>
            <person name="Chen Y."/>
            <person name="Xia C."/>
            <person name="Peng C."/>
            <person name="Ruan H."/>
            <person name="Kirkey M."/>
            <person name="Wang D."/>
            <person name="Jensen L.M."/>
            <person name="Kwon O.K."/>
            <person name="Lee S."/>
            <person name="Pletcher S.D."/>
            <person name="Tan M."/>
            <person name="Lombard D.B."/>
            <person name="White K.P."/>
            <person name="Zhao H."/>
            <person name="Li J."/>
            <person name="Roeder R.G."/>
            <person name="Yang X."/>
            <person name="Zhao Y."/>
        </authorList>
    </citation>
    <scope>HYDROXYBUTYRYLATION AT LYS-6; LYS-12; LYS-17; LYS-21; LYS-35; LYS-86; LYS-117 AND LYS-121</scope>
</reference>
<reference key="20">
    <citation type="journal article" date="2016" name="Nat. Commun.">
        <title>PARP3 is a sensor of nicked nucleosomes and monoribosylates histone H2B(Glu2).</title>
        <authorList>
            <person name="Grundy G.J."/>
            <person name="Polo L.M."/>
            <person name="Zeng Z."/>
            <person name="Rulten S.L."/>
            <person name="Hoch N.C."/>
            <person name="Paomephan P."/>
            <person name="Xu Y."/>
            <person name="Sweet S.M."/>
            <person name="Thorne A.W."/>
            <person name="Oliver A.W."/>
            <person name="Matthews S.J."/>
            <person name="Pearl L.H."/>
            <person name="Caldecott K.W."/>
        </authorList>
    </citation>
    <scope>ADP-RIBOSYLATION AT GLU-3</scope>
</reference>
<reference key="21">
    <citation type="journal article" date="2019" name="Mol. Cell">
        <title>Glutarylation of histone H4 lysine 91 regulates chromatin dynamics.</title>
        <authorList>
            <person name="Bao X."/>
            <person name="Liu Z."/>
            <person name="Zhang W."/>
            <person name="Gladysz K."/>
            <person name="Fung Y.M.E."/>
            <person name="Tian G."/>
            <person name="Xiong Y."/>
            <person name="Wong J.W.H."/>
            <person name="Yuen K.W.Y."/>
            <person name="Li X.D."/>
        </authorList>
    </citation>
    <scope>GLUTARYLATION AT LYS-17; LYS-35; LYS-44; LYS-47; LYS-109; LYS-117 AND LYS-121</scope>
</reference>
<reference key="22">
    <citation type="journal article" date="2019" name="Nature">
        <title>Metabolic regulation of gene expression by histone lactylation.</title>
        <authorList>
            <person name="Zhang D."/>
            <person name="Tang Z."/>
            <person name="Huang H."/>
            <person name="Zhou G."/>
            <person name="Cui C."/>
            <person name="Weng Y."/>
            <person name="Liu W."/>
            <person name="Kim S."/>
            <person name="Lee S."/>
            <person name="Perez-Neut M."/>
            <person name="Ding J."/>
            <person name="Czyz D."/>
            <person name="Hu R."/>
            <person name="Ye Z."/>
            <person name="He M."/>
            <person name="Zheng Y.G."/>
            <person name="Shuman H.A."/>
            <person name="Dai L."/>
            <person name="Ren B."/>
            <person name="Roeder R.G."/>
            <person name="Becker L."/>
            <person name="Zhao Y."/>
        </authorList>
    </citation>
    <scope>LACTYLATION AT LYS-6; LYS-12; LYS-16; LYS-17; LYS-21; LYS-24; LYS-44; LYS-86; LYS-109; LYS-117 AND LYS-121</scope>
</reference>
<reference key="23">
    <citation type="journal article" date="2021" name="Elife">
        <title>Serine ADP-ribosylation marks nucleosomes for ALC1-dependent chromatin remodeling.</title>
        <authorList>
            <person name="Mohapatra J."/>
            <person name="Tashiro K."/>
            <person name="Beckner R.L."/>
            <person name="Sierra J."/>
            <person name="Kilgore J.A."/>
            <person name="Williams N.S."/>
            <person name="Liszczak G."/>
        </authorList>
    </citation>
    <scope>ADP-RIBOSYLATION AT SER-7</scope>
</reference>
<comment type="function">
    <text>Core component of nucleosome. Nucleosomes wrap and compact DNA into chromatin, limiting DNA accessibility to the cellular machineries which require DNA as a template. Histones thereby play a central role in transcription regulation, DNA repair, DNA replication and chromosomal stability. DNA accessibility is regulated via a complex set of post-translational modifications of histones, also called histone code, and nucleosome remodeling.</text>
</comment>
<comment type="subunit">
    <text>The nucleosome is a histone octamer containing two molecules each of H2A, H2B, H3 and H4 assembled in one H3-H4 heterotetramer and two H2A-H2B heterodimers. The octamer wraps approximately 147 bp of DNA.</text>
</comment>
<comment type="subcellular location">
    <subcellularLocation>
        <location>Nucleus</location>
    </subcellularLocation>
    <subcellularLocation>
        <location>Chromosome</location>
    </subcellularLocation>
</comment>
<comment type="PTM">
    <text evidence="14">Monoubiquitination at Lys-35 (H2BK34Ub) by the MSL1/MSL2 dimer is required for histone H3 'Lys-4' (H3K4me) and 'Lys-79' (H3K79me) methylation and transcription activation at specific gene loci, such as HOXA9 and MEIS1 loci. Similarly, monoubiquitination at Lys-121 (H2BK120Ub) by the RNF20/40 complex gives a specific tag for epigenetic transcriptional activation and is also prerequisite for histone H3 'Lys-4' and 'Lys-79' methylation. It also functions cooperatively with the FACT dimer to stimulate elongation by RNA polymerase II. H2BK120Ub also acts as a regulator of mRNA splicing: deubiquitination by USP49 is required for efficient cotranscriptional splicing of a large set of exons.</text>
</comment>
<comment type="PTM">
    <text evidence="7 11">Phosphorylation at Ser-37 (H2BS36ph) by AMPK in response to stress promotes transcription (By similarity). Phosphorylated on Ser-15 (H2BS14ph) by STK4/MST1 during apoptosis; which facilitates apoptotic chromatin condensation (PubMed:12757711). Also phosphorylated on Ser-15 in response to DNA double strand breaks (DSBs), and in correlation with somatic hypermutation and immunoglobulin class-switch recombination.</text>
</comment>
<comment type="PTM">
    <text evidence="4">GlcNAcylation at Ser-113 promotes monoubiquitination of Lys-121. It fluctuates in response to extracellular glucose, and associates with transcribed genes (By similarity).</text>
</comment>
<comment type="PTM">
    <text evidence="8 22 25">ADP-ribosylated by PARP1 or PARP2 on Ser-7 (H2BS6ADPr) in response to DNA damage (PubMed:34874266). H2BS6ADPr promotes recruitment of CHD1L (PubMed:34874266). Mono-ADP-ribosylated on Glu-3 (H2BE2ADPr) by PARP3 in response to single-strand breaks (PubMed:27530147). Poly ADP-ribosylation on Glu-36 (H2BE35ADPr) by PARP1 regulates adipogenesis: it inhibits phosphorylation at Ser-37 (H2BS36ph), thereby blocking expression of pro-adipogenetic genes (By similarity).</text>
</comment>
<comment type="PTM">
    <text evidence="17">Crotonylation (Kcr) is specifically present in male germ cells and marks testis-specific genes in post-meiotic cells, including X-linked genes that escape sex chromosome inactivation in haploid cells. Crotonylation marks active promoters and enhancers and confers resistance to transcriptional repressors. It is also associated with post-meiotically activated genes on autosomes.</text>
</comment>
<comment type="PTM">
    <text evidence="24">Lactylated in macrophages by EP300/P300 by using lactoyl-CoA directly derived from endogenous or exogenous lactate, leading to stimulates gene transcription.</text>
</comment>
<comment type="similarity">
    <text evidence="26">Belongs to the histone H2B family.</text>
</comment>
<sequence>MPEPSKSAPAPKKGSKKAVTKAQKKDGKKRKRSRKESYSVYVYKVLKQVHPDTGISSKAMGIMNSFVNDIFERIAGEASRLAHYNKRSTITSREIQTAVRLLLPGELAKHAVSEGTKAVTKYTSSK</sequence>
<evidence type="ECO:0000250" key="1">
    <source>
        <dbReference type="UniProtKB" id="P23527"/>
    </source>
</evidence>
<evidence type="ECO:0000250" key="2">
    <source>
        <dbReference type="UniProtKB" id="P33778"/>
    </source>
</evidence>
<evidence type="ECO:0000250" key="3">
    <source>
        <dbReference type="UniProtKB" id="P58876"/>
    </source>
</evidence>
<evidence type="ECO:0000250" key="4">
    <source>
        <dbReference type="UniProtKB" id="P62807"/>
    </source>
</evidence>
<evidence type="ECO:0000250" key="5">
    <source>
        <dbReference type="UniProtKB" id="Q00729"/>
    </source>
</evidence>
<evidence type="ECO:0000250" key="6">
    <source>
        <dbReference type="UniProtKB" id="Q5QNW6"/>
    </source>
</evidence>
<evidence type="ECO:0000250" key="7">
    <source>
        <dbReference type="UniProtKB" id="Q64475"/>
    </source>
</evidence>
<evidence type="ECO:0000250" key="8">
    <source>
        <dbReference type="UniProtKB" id="Q6ZWY9"/>
    </source>
</evidence>
<evidence type="ECO:0000250" key="9">
    <source>
        <dbReference type="UniProtKB" id="Q96A08"/>
    </source>
</evidence>
<evidence type="ECO:0000256" key="10">
    <source>
        <dbReference type="SAM" id="MobiDB-lite"/>
    </source>
</evidence>
<evidence type="ECO:0000269" key="11">
    <source>
    </source>
</evidence>
<evidence type="ECO:0000269" key="12">
    <source>
    </source>
</evidence>
<evidence type="ECO:0000269" key="13">
    <source>
    </source>
</evidence>
<evidence type="ECO:0000269" key="14">
    <source>
    </source>
</evidence>
<evidence type="ECO:0000269" key="15">
    <source>
    </source>
</evidence>
<evidence type="ECO:0000269" key="16">
    <source>
    </source>
</evidence>
<evidence type="ECO:0000269" key="17">
    <source>
    </source>
</evidence>
<evidence type="ECO:0000269" key="18">
    <source>
    </source>
</evidence>
<evidence type="ECO:0000269" key="19">
    <source>
    </source>
</evidence>
<evidence type="ECO:0000269" key="20">
    <source>
    </source>
</evidence>
<evidence type="ECO:0000269" key="21">
    <source>
    </source>
</evidence>
<evidence type="ECO:0000269" key="22">
    <source>
    </source>
</evidence>
<evidence type="ECO:0000269" key="23">
    <source>
    </source>
</evidence>
<evidence type="ECO:0000269" key="24">
    <source>
    </source>
</evidence>
<evidence type="ECO:0000269" key="25">
    <source>
    </source>
</evidence>
<evidence type="ECO:0000305" key="26"/>
<evidence type="ECO:0000312" key="27">
    <source>
        <dbReference type="HGNC" id="HGNC:4749"/>
    </source>
</evidence>
<evidence type="ECO:0007829" key="28">
    <source>
        <dbReference type="PDB" id="8OL1"/>
    </source>
</evidence>
<gene>
    <name evidence="27" type="primary">H2BC15</name>
    <name evidence="27" type="synonym">H2BFD</name>
    <name evidence="27" type="synonym">HIST1H2BN</name>
</gene>
<organism>
    <name type="scientific">Homo sapiens</name>
    <name type="common">Human</name>
    <dbReference type="NCBI Taxonomy" id="9606"/>
    <lineage>
        <taxon>Eukaryota</taxon>
        <taxon>Metazoa</taxon>
        <taxon>Chordata</taxon>
        <taxon>Craniata</taxon>
        <taxon>Vertebrata</taxon>
        <taxon>Euteleostomi</taxon>
        <taxon>Mammalia</taxon>
        <taxon>Eutheria</taxon>
        <taxon>Euarchontoglires</taxon>
        <taxon>Primates</taxon>
        <taxon>Haplorrhini</taxon>
        <taxon>Catarrhini</taxon>
        <taxon>Hominidae</taxon>
        <taxon>Homo</taxon>
    </lineage>
</organism>
<feature type="initiator methionine" description="Removed" evidence="1">
    <location>
        <position position="1"/>
    </location>
</feature>
<feature type="chain" id="PRO_0000071830" description="Histone H2B type 1-N">
    <location>
        <begin position="2"/>
        <end position="126"/>
    </location>
</feature>
<feature type="region of interest" description="Disordered" evidence="10">
    <location>
        <begin position="1"/>
        <end position="36"/>
    </location>
</feature>
<feature type="compositionally biased region" description="Low complexity" evidence="10">
    <location>
        <begin position="1"/>
        <end position="12"/>
    </location>
</feature>
<feature type="modified residue" description="N-acetylproline" evidence="1">
    <location>
        <position position="2"/>
    </location>
</feature>
<feature type="modified residue" description="ADP-ribosyl glutamic acid" evidence="22">
    <location>
        <position position="3"/>
    </location>
</feature>
<feature type="modified residue" description="N6-(2-hydroxyisobutyryl)lysine; alternate" evidence="19">
    <location>
        <position position="6"/>
    </location>
</feature>
<feature type="modified residue" description="N6-(beta-hydroxybutyryl)lysine; alternate" evidence="21">
    <location>
        <position position="6"/>
    </location>
</feature>
<feature type="modified residue" description="N6-acetyllysine; alternate" evidence="12 14">
    <location>
        <position position="6"/>
    </location>
</feature>
<feature type="modified residue" description="N6-butyryllysine; alternate" evidence="20">
    <location>
        <position position="6"/>
    </location>
</feature>
<feature type="modified residue" description="N6-crotonyllysine; alternate" evidence="17">
    <location>
        <position position="6"/>
    </location>
</feature>
<feature type="modified residue" description="N6-lactoyllysine; alternate" evidence="24">
    <location>
        <position position="6"/>
    </location>
</feature>
<feature type="modified residue" description="ADP-ribosylserine" evidence="25">
    <location>
        <position position="7"/>
    </location>
</feature>
<feature type="modified residue" description="N6-(beta-hydroxybutyryl)lysine; alternate" evidence="21">
    <location>
        <position position="12"/>
    </location>
</feature>
<feature type="modified residue" description="N6-acetyllysine; alternate" evidence="14">
    <location>
        <position position="12"/>
    </location>
</feature>
<feature type="modified residue" description="N6-crotonyllysine; alternate" evidence="17">
    <location>
        <position position="12"/>
    </location>
</feature>
<feature type="modified residue" description="N6-lactoyllysine; alternate" evidence="24">
    <location>
        <position position="12"/>
    </location>
</feature>
<feature type="modified residue" description="N6-(2-hydroxyisobutyryl)lysine; alternate" evidence="19">
    <location>
        <position position="13"/>
    </location>
</feature>
<feature type="modified residue" description="N6-acetyllysine; alternate" evidence="12 14">
    <location>
        <position position="13"/>
    </location>
</feature>
<feature type="modified residue" description="N6-crotonyllysine; alternate" evidence="17">
    <location>
        <position position="13"/>
    </location>
</feature>
<feature type="modified residue" description="Phosphoserine; by STK4/MST1" evidence="11">
    <location>
        <position position="15"/>
    </location>
</feature>
<feature type="modified residue" description="N6-acetyllysine; alternate" evidence="12 14">
    <location>
        <position position="16"/>
    </location>
</feature>
<feature type="modified residue" description="N6-crotonyllysine; alternate" evidence="17">
    <location>
        <position position="16"/>
    </location>
</feature>
<feature type="modified residue" description="N6-lactoyllysine; alternate" evidence="24">
    <location>
        <position position="16"/>
    </location>
</feature>
<feature type="modified residue" description="N6-(beta-hydroxybutyryl)lysine; alternate" evidence="21">
    <location>
        <position position="17"/>
    </location>
</feature>
<feature type="modified residue" description="N6-acetyllysine; alternate" evidence="14">
    <location>
        <position position="17"/>
    </location>
</feature>
<feature type="modified residue" description="N6-crotonyllysine; alternate" evidence="17">
    <location>
        <position position="17"/>
    </location>
</feature>
<feature type="modified residue" description="N6-glutaryllysine; alternate" evidence="23">
    <location>
        <position position="17"/>
    </location>
</feature>
<feature type="modified residue" description="N6-lactoyllysine; alternate" evidence="24">
    <location>
        <position position="17"/>
    </location>
</feature>
<feature type="modified residue" description="N6-(2-hydroxyisobutyryl)lysine; alternate" evidence="19">
    <location>
        <position position="21"/>
    </location>
</feature>
<feature type="modified residue" description="N6-(beta-hydroxybutyryl)lysine; alternate" evidence="21">
    <location>
        <position position="21"/>
    </location>
</feature>
<feature type="modified residue" description="N6-acetyllysine; alternate" evidence="12 14">
    <location>
        <position position="21"/>
    </location>
</feature>
<feature type="modified residue" description="N6-butyryllysine; alternate" evidence="20">
    <location>
        <position position="21"/>
    </location>
</feature>
<feature type="modified residue" description="N6-crotonyllysine; alternate" evidence="17">
    <location>
        <position position="21"/>
    </location>
</feature>
<feature type="modified residue" description="N6-lactoyllysine; alternate" evidence="24">
    <location>
        <position position="21"/>
    </location>
</feature>
<feature type="modified residue" description="N6-(2-hydroxyisobutyryl)lysine; alternate" evidence="19">
    <location>
        <position position="24"/>
    </location>
</feature>
<feature type="modified residue" description="N6-acetyllysine; alternate" evidence="2">
    <location>
        <position position="24"/>
    </location>
</feature>
<feature type="modified residue" description="N6-crotonyllysine; alternate" evidence="17">
    <location>
        <position position="24"/>
    </location>
</feature>
<feature type="modified residue" description="N6-lactoyllysine; alternate" evidence="24">
    <location>
        <position position="24"/>
    </location>
</feature>
<feature type="modified residue" description="N6-(2-hydroxyisobutyryl)lysine" evidence="19">
    <location>
        <position position="25"/>
    </location>
</feature>
<feature type="modified residue" description="N6-(2-hydroxyisobutyryl)lysine; alternate" evidence="19">
    <location>
        <position position="35"/>
    </location>
</feature>
<feature type="modified residue" description="N6-(beta-hydroxybutyryl)lysine; alternate" evidence="21">
    <location>
        <position position="35"/>
    </location>
</feature>
<feature type="modified residue" description="N6-crotonyllysine; alternate" evidence="17">
    <location>
        <position position="35"/>
    </location>
</feature>
<feature type="modified residue" description="N6-glutaryllysine; alternate" evidence="23">
    <location>
        <position position="35"/>
    </location>
</feature>
<feature type="modified residue" description="N6-succinyllysine; alternate" evidence="18">
    <location>
        <position position="35"/>
    </location>
</feature>
<feature type="modified residue" description="PolyADP-ribosyl glutamic acid" evidence="7">
    <location>
        <position position="36"/>
    </location>
</feature>
<feature type="modified residue" description="Phosphoserine; by AMPK" evidence="7">
    <location>
        <position position="37"/>
    </location>
</feature>
<feature type="modified residue" description="N6-(2-hydroxyisobutyryl)lysine; alternate" evidence="19">
    <location>
        <position position="44"/>
    </location>
</feature>
<feature type="modified residue" description="N6-glutaryllysine; alternate" evidence="23">
    <location>
        <position position="44"/>
    </location>
</feature>
<feature type="modified residue" description="N6-lactoyllysine; alternate" evidence="24">
    <location>
        <position position="44"/>
    </location>
</feature>
<feature type="modified residue" description="N6-(2-hydroxyisobutyryl)lysine; alternate" evidence="19">
    <location>
        <position position="47"/>
    </location>
</feature>
<feature type="modified residue" description="N6-glutaryllysine; alternate" evidence="23">
    <location>
        <position position="47"/>
    </location>
</feature>
<feature type="modified residue" description="N6-methyllysine; alternate" evidence="14">
    <location>
        <position position="47"/>
    </location>
</feature>
<feature type="modified residue" description="N6,N6-dimethyllysine; alternate" evidence="14">
    <location>
        <position position="58"/>
    </location>
</feature>
<feature type="modified residue" description="N6-(2-hydroxyisobutyryl)lysine; alternate" evidence="19">
    <location>
        <position position="58"/>
    </location>
</feature>
<feature type="modified residue" description="Dimethylated arginine" evidence="9">
    <location>
        <position position="80"/>
    </location>
</feature>
<feature type="modified residue" description="N6,N6,N6-trimethyllysine; alternate" evidence="9">
    <location>
        <position position="86"/>
    </location>
</feature>
<feature type="modified residue" description="N6-(2-hydroxyisobutyryl)lysine; alternate" evidence="19">
    <location>
        <position position="86"/>
    </location>
</feature>
<feature type="modified residue" description="N6-(beta-hydroxybutyryl)lysine; alternate" evidence="21">
    <location>
        <position position="86"/>
    </location>
</feature>
<feature type="modified residue" description="N6-acetyllysine; alternate" evidence="9">
    <location>
        <position position="86"/>
    </location>
</feature>
<feature type="modified residue" description="N6-lactoyllysine; alternate" evidence="24">
    <location>
        <position position="86"/>
    </location>
</feature>
<feature type="modified residue" description="Omega-N-methylarginine" evidence="9">
    <location>
        <position position="87"/>
    </location>
</feature>
<feature type="modified residue" description="Omega-N-methylarginine" evidence="9">
    <location>
        <position position="93"/>
    </location>
</feature>
<feature type="modified residue" description="N6-(2-hydroxyisobutyryl)lysine; alternate" evidence="19">
    <location>
        <position position="109"/>
    </location>
</feature>
<feature type="modified residue" description="N6-glutaryllysine; alternate" evidence="23">
    <location>
        <position position="109"/>
    </location>
</feature>
<feature type="modified residue" description="N6-lactoyllysine; alternate" evidence="24">
    <location>
        <position position="109"/>
    </location>
</feature>
<feature type="modified residue" description="N6-methyllysine; alternate" evidence="14">
    <location>
        <position position="109"/>
    </location>
</feature>
<feature type="modified residue" description="Phosphothreonine" evidence="5">
    <location>
        <position position="116"/>
    </location>
</feature>
<feature type="modified residue" description="N6-(2-hydroxyisobutyryl)lysine; alternate" evidence="19">
    <location>
        <position position="117"/>
    </location>
</feature>
<feature type="modified residue" description="N6-(beta-hydroxybutyryl)lysine; alternate" evidence="21">
    <location>
        <position position="117"/>
    </location>
</feature>
<feature type="modified residue" description="N6-glutaryllysine; alternate" evidence="23">
    <location>
        <position position="117"/>
    </location>
</feature>
<feature type="modified residue" description="N6-lactoyllysine; alternate" evidence="24">
    <location>
        <position position="117"/>
    </location>
</feature>
<feature type="modified residue" description="N6-malonyllysine; alternate" evidence="18">
    <location>
        <position position="117"/>
    </location>
</feature>
<feature type="modified residue" description="N6-methylated lysine; alternate" evidence="5">
    <location>
        <position position="117"/>
    </location>
</feature>
<feature type="modified residue" description="N6-succinyllysine; alternate" evidence="18">
    <location>
        <position position="117"/>
    </location>
</feature>
<feature type="modified residue" description="N6-(2-hydroxyisobutyryl)lysine; alternate" evidence="19">
    <location>
        <position position="121"/>
    </location>
</feature>
<feature type="modified residue" description="N6-(beta-hydroxybutyryl)lysine; alternate" evidence="21">
    <location>
        <position position="121"/>
    </location>
</feature>
<feature type="modified residue" description="N6-glutaryllysine; alternate" evidence="23">
    <location>
        <position position="121"/>
    </location>
</feature>
<feature type="modified residue" description="N6-lactoyllysine; alternate" evidence="24">
    <location>
        <position position="121"/>
    </location>
</feature>
<feature type="modified residue" description="N6-succinyllysine; alternate" evidence="18">
    <location>
        <position position="121"/>
    </location>
</feature>
<feature type="glycosylation site" description="O-linked (GlcNAc) serine" evidence="4">
    <location>
        <position position="113"/>
    </location>
</feature>
<feature type="cross-link" description="Glycyl lysine isopeptide (Lys-Gly) (interchain with G-Cter in SUMO2); alternate" evidence="3">
    <location>
        <position position="6"/>
    </location>
</feature>
<feature type="cross-link" description="Glycyl lysine isopeptide (Lys-Gly) (interchain with G-Cter in SUMO2); alternate" evidence="6">
    <location>
        <position position="21"/>
    </location>
</feature>
<feature type="cross-link" description="Glycyl lysine isopeptide (Lys-Gly) (interchain with G-Cter in ubiquitin); alternate" evidence="16">
    <location>
        <position position="35"/>
    </location>
</feature>
<feature type="cross-link" description="Glycyl lysine isopeptide (Lys-Gly) (interchain with G-Cter in ubiquitin); alternate" evidence="13 14 15">
    <location>
        <position position="121"/>
    </location>
</feature>
<feature type="helix" evidence="28">
    <location>
        <begin position="39"/>
        <end position="46"/>
    </location>
</feature>
<feature type="turn" evidence="28">
    <location>
        <begin position="47"/>
        <end position="49"/>
    </location>
</feature>
<feature type="helix" evidence="28">
    <location>
        <begin position="57"/>
        <end position="84"/>
    </location>
</feature>
<feature type="strand" evidence="28">
    <location>
        <begin position="88"/>
        <end position="90"/>
    </location>
</feature>
<feature type="helix" evidence="28">
    <location>
        <begin position="92"/>
        <end position="102"/>
    </location>
</feature>
<feature type="helix" evidence="28">
    <location>
        <begin position="105"/>
        <end position="123"/>
    </location>
</feature>